<gene>
    <name evidence="23" type="primary">LEF1</name>
</gene>
<proteinExistence type="evidence at protein level"/>
<protein>
    <recommendedName>
        <fullName evidence="23">Lymphoid enhancer-binding factor 1</fullName>
        <shortName evidence="16">LEF-1</shortName>
    </recommendedName>
    <alternativeName>
        <fullName>T cell-specific transcription factor 1-alpha</fullName>
        <shortName evidence="23">TCF1-alpha</shortName>
    </alternativeName>
</protein>
<accession>Q9UJU2</accession>
<accession>B4DG38</accession>
<accession>B7Z8E2</accession>
<accession>E9PDK3</accession>
<accession>Q3ZCU4</accession>
<accession>Q9HAZ0</accession>
<comment type="function">
    <text evidence="2 5 11 12">Transcription factor that binds DNA in a sequence-specific manner (PubMed:2010090). Participates in the Wnt signaling pathway (By similarity). Activates transcription of target genes in the presence of CTNNB1 and EP300 (By similarity). PIAG antagonizes both Wnt-dependent and Wnt-independent activation by LEF1 (By similarity). TLE1, TLE2, TLE3 and TLE4 repress transactivation mediated by LEF1 and CTNNB1 (PubMed:11266540). Regulates T-cell receptor alpha enhancer function (PubMed:19653274). Required for IL17A expressing gamma-delta T-cell maturation and development, via binding to regulator loci of BLK to modulate expression (By similarity). Acts as a positive regulator of odontoblast differentiation during mesenchymal tooth germ formation, expression is repressed during the bell stage by MSX1-mediated inhibition of CTNNB1 signaling (By similarity). May play a role in hair cell differentiation and follicle morphogenesis (By similarity).</text>
</comment>
<comment type="function">
    <molecule>Isoform 1</molecule>
    <text evidence="11">Transcriptionally activates MYC and CCND1 expression and enhances proliferation of pancreatic tumor cells.</text>
</comment>
<comment type="function">
    <molecule>Isoform 3</molecule>
    <text evidence="6">Lacks the CTNNB1 interaction domain and may therefore be an antagonist for Wnt signaling.</text>
</comment>
<comment type="function">
    <molecule>Isoform 5</molecule>
    <text evidence="11">Transcriptionally activates the fibronectin promoter, binds to and represses transcription from the E-cadherin promoter in a CTNNB1-independent manner, and is involved in reducing cellular aggregation and increasing cell migration of pancreatic cancer cells.</text>
</comment>
<comment type="subunit">
    <text evidence="2 7 8 10 13 14 15">Binds the armadillo repeat of CTNNB1 and forms a stable complex. Interacts with EP300, TLE1 and PIASG (By similarity). Binds ALYREF/THOC4, MDFI and MDFIC. Interacts with NLK. Interacts with DAZAP2 (PubMed:19304756).</text>
</comment>
<comment type="interaction">
    <interactant intactId="EBI-926131">
        <id>Q9UJU2</id>
    </interactant>
    <interactant intactId="EBI-491549">
        <id>P35222</id>
        <label>CTNNB1</label>
    </interactant>
    <organismsDiffer>false</organismsDiffer>
    <experiments>10</experiments>
</comment>
<comment type="interaction">
    <interactant intactId="EBI-926131">
        <id>Q9UJU2</id>
    </interactant>
    <interactant intactId="EBI-741760">
        <id>P49789</id>
        <label>FHIT</label>
    </interactant>
    <organismsDiffer>false</organismsDiffer>
    <experiments>2</experiments>
</comment>
<comment type="interaction">
    <interactant intactId="EBI-926131">
        <id>Q9UJU2</id>
    </interactant>
    <interactant intactId="EBI-475981">
        <id>P08069</id>
        <label>IGF1R</label>
    </interactant>
    <organismsDiffer>false</organismsDiffer>
    <experiments>5</experiments>
</comment>
<comment type="interaction">
    <interactant intactId="EBI-926131">
        <id>Q9UJU2</id>
    </interactant>
    <interactant intactId="EBI-2007911">
        <id>Q16236</id>
        <label>NFE2L2</label>
    </interactant>
    <organismsDiffer>false</organismsDiffer>
    <experiments>3</experiments>
</comment>
<comment type="interaction">
    <interactant intactId="EBI-926131">
        <id>Q9UJU2</id>
    </interactant>
    <interactant intactId="EBI-912440">
        <id>Q96LA8</id>
        <label>PRMT6</label>
    </interactant>
    <organismsDiffer>false</organismsDiffer>
    <experiments>3</experiments>
</comment>
<comment type="subcellular location">
    <subcellularLocation>
        <location evidence="3">Nucleus</location>
    </subcellularLocation>
    <text evidence="1">Found in nuclear bodies upon PIASG binding.</text>
</comment>
<comment type="alternative products">
    <event type="alternative promoter"/>
    <event type="alternative splicing"/>
    <isoform>
        <id>Q9UJU2-1</id>
        <name>1</name>
        <name>A</name>
        <sequence type="displayed"/>
    </isoform>
    <isoform>
        <id>Q9UJU2-2</id>
        <name>2</name>
        <name>B</name>
        <name>8A</name>
        <sequence type="described" ref="VSP_002188"/>
    </isoform>
    <isoform>
        <id>Q9UJU2-3</id>
        <name>3</name>
        <name>LEF-1-DN</name>
        <sequence type="described" ref="VSP_007022"/>
    </isoform>
    <isoform>
        <id>Q9UJU2-4</id>
        <name>4</name>
        <sequence type="described" ref="VSP_007022 VSP_002188"/>
    </isoform>
    <isoform>
        <id>Q9UJU2-5</id>
        <name>5</name>
        <sequence type="described" ref="VSP_040068"/>
    </isoform>
    <isoform>
        <id>Q9UJU2-6</id>
        <name>6</name>
        <sequence type="described" ref="VSP_040068 VSP_040069"/>
    </isoform>
    <isoform>
        <id>Q9UJU2-7</id>
        <name>7</name>
        <sequence type="described" ref="VSP_044877 VSP_040068"/>
    </isoform>
    <text>Additional isoforms seem to exist.</text>
</comment>
<comment type="tissue specificity">
    <text evidence="11">Detected in thymus. Not detected in normal colon, but highly expressed in colon cancer biopsies and colon cancer cell lines. Expressed in several pancreatic tumors and weakly expressed in normal pancreatic tissue. Isoforms 1 and 5 are detected in several pancreatic cell lines.</text>
</comment>
<comment type="domain">
    <text>Proline-rich and acidic regions are implicated in the activation functions of RNA polymerase II transcription factors.</text>
</comment>
<comment type="PTM">
    <text evidence="8">Phosphorylated at Thr-155 and/or Ser-166 by NLK. Phosphorylation by NLK at these sites represses LEF1-mediated transcriptional activation of target genes of the canonical Wnt signaling pathway.</text>
</comment>
<comment type="miscellaneous">
    <molecule>Isoform 1</molecule>
    <text>Produced by alternative promoter usage.</text>
</comment>
<comment type="miscellaneous">
    <molecule>Isoform 2</molecule>
    <text evidence="21">Produced by alternative splicing of isoform 1. May be produced at very low levels due to a premature stop codon in the mRNA, leading to nonsense-mediated mRNA decay.</text>
</comment>
<comment type="miscellaneous">
    <molecule>Isoform 3</molecule>
    <text evidence="21">Produced by alternative promoter usage. Acts as a dominant negative mutant.</text>
</comment>
<comment type="miscellaneous">
    <molecule>Isoform 4</molecule>
    <text evidence="21">Produced by alternative splicing of isoform 3.</text>
</comment>
<comment type="miscellaneous">
    <molecule>Isoform 5</molecule>
    <text evidence="21">Produced by alternative splicing of isoform 1.</text>
</comment>
<comment type="miscellaneous">
    <molecule>Isoform 6</molecule>
    <text evidence="21">Produced by alternative splicing of isoform 1.</text>
</comment>
<comment type="similarity">
    <text evidence="21">Belongs to the TCF/LEF family.</text>
</comment>
<name>LEF1_HUMAN</name>
<feature type="chain" id="PRO_0000048595" description="Lymphoid enhancer-binding factor 1">
    <location>
        <begin position="1"/>
        <end position="399"/>
    </location>
</feature>
<feature type="DNA-binding region" description="HMG box" evidence="3">
    <location>
        <begin position="299"/>
        <end position="367"/>
    </location>
</feature>
<feature type="region of interest" description="Disordered" evidence="4">
    <location>
        <begin position="1"/>
        <end position="104"/>
    </location>
</feature>
<feature type="region of interest" description="CTNNB1-binding" evidence="1">
    <location>
        <begin position="1"/>
        <end position="62"/>
    </location>
</feature>
<feature type="region of interest" description="Disordered" evidence="4">
    <location>
        <begin position="166"/>
        <end position="192"/>
    </location>
</feature>
<feature type="region of interest" description="Disordered" evidence="4">
    <location>
        <begin position="268"/>
        <end position="298"/>
    </location>
</feature>
<feature type="region of interest" description="Disordered" evidence="4">
    <location>
        <begin position="369"/>
        <end position="399"/>
    </location>
</feature>
<feature type="compositionally biased region" description="Gly residues" evidence="4">
    <location>
        <begin position="1"/>
        <end position="14"/>
    </location>
</feature>
<feature type="compositionally biased region" description="Basic and acidic residues" evidence="4">
    <location>
        <begin position="24"/>
        <end position="45"/>
    </location>
</feature>
<feature type="compositionally biased region" description="Basic and acidic residues" evidence="4">
    <location>
        <begin position="82"/>
        <end position="98"/>
    </location>
</feature>
<feature type="compositionally biased region" description="Basic and acidic residues" evidence="4">
    <location>
        <begin position="269"/>
        <end position="296"/>
    </location>
</feature>
<feature type="modified residue" description="Phosphoserine" evidence="24">
    <location>
        <position position="132"/>
    </location>
</feature>
<feature type="modified residue" description="Phosphothreonine; by NLK" evidence="22">
    <location>
        <position position="155"/>
    </location>
</feature>
<feature type="modified residue" description="Phosphoserine; by NLK" evidence="22">
    <location>
        <position position="166"/>
    </location>
</feature>
<feature type="cross-link" description="Glycyl lysine isopeptide (Lys-Gly) (interchain with G-Cter in SUMO)" evidence="1">
    <location>
        <position position="27"/>
    </location>
</feature>
<feature type="cross-link" description="Glycyl lysine isopeptide (Lys-Gly) (interchain with G-Cter in SUMO)" evidence="1">
    <location>
        <position position="269"/>
    </location>
</feature>
<feature type="splice variant" id="VSP_007022" description="In isoform 3 and isoform 4." evidence="20">
    <location>
        <begin position="1"/>
        <end position="115"/>
    </location>
</feature>
<feature type="splice variant" id="VSP_044877" description="In isoform 7." evidence="17">
    <original>MPQLSGGGGGGGGDPELCATDEMIPFKDEGDPQKEKIFAEISHPEEEGDLADIKSSLVNESEIIPASNGH</original>
    <variation>MA</variation>
    <location>
        <begin position="1"/>
        <end position="70"/>
    </location>
</feature>
<feature type="splice variant" id="VSP_040068" description="In isoform 5, isoform 6 and isoform 7." evidence="17 18 19">
    <location>
        <begin position="214"/>
        <end position="241"/>
    </location>
</feature>
<feature type="splice variant" id="VSP_002188" description="In isoform 2 and isoform 4." evidence="20">
    <original>KPQHEQRKEQEPKRPHIKKPLNAFMLYMKEMRANVVAECTLKESAAINQILGRRWHALSREEQAKYYELARKERQLHMQLYPGWSARDNYGKKKKRKREKLQESASGTGPRMTAAYI</original>
    <variation>CSAFLLPHPFLIPSTPSPNHHHHHLLGSLSMNRERSRSQKDLTLRSL</variation>
    <location>
        <begin position="283"/>
        <end position="399"/>
    </location>
</feature>
<feature type="splice variant" id="VSP_040069" description="In isoform 6." evidence="18">
    <original>TGPRMTAAYI</original>
    <variation>GKRSSFPTCKAKAATPGPLLEMEAC</variation>
    <location>
        <begin position="390"/>
        <end position="399"/>
    </location>
</feature>
<feature type="sequence variant" id="VAR_035935" description="In a colorectal cancer sample; somatic mutation; dbSNP:rs369649181." evidence="9">
    <original>G</original>
    <variation>R</variation>
    <location>
        <position position="113"/>
    </location>
</feature>
<feature type="mutagenesis site" description="Reduced phosphorylation by NLK; when associated with A-166." evidence="8">
    <original>T</original>
    <variation>A</variation>
    <location>
        <position position="155"/>
    </location>
</feature>
<feature type="mutagenesis site" description="Reduced phosphorylation by NLK; when associated with A-155." evidence="8">
    <original>S</original>
    <variation>A</variation>
    <location>
        <position position="166"/>
    </location>
</feature>
<feature type="sequence conflict" description="In Ref. 5; BAH13928." evidence="21" ref="5">
    <original>Q</original>
    <variation>R</variation>
    <location>
        <position position="146"/>
    </location>
</feature>
<dbReference type="EMBL" id="AF288571">
    <property type="protein sequence ID" value="AAG01022.1"/>
    <property type="molecule type" value="mRNA"/>
</dbReference>
<dbReference type="EMBL" id="AF198532">
    <property type="protein sequence ID" value="AAF13268.1"/>
    <property type="molecule type" value="mRNA"/>
</dbReference>
<dbReference type="EMBL" id="AF294627">
    <property type="protein sequence ID" value="AAG26886.1"/>
    <property type="molecule type" value="mRNA"/>
</dbReference>
<dbReference type="EMBL" id="AK294395">
    <property type="protein sequence ID" value="BAG57649.1"/>
    <property type="molecule type" value="mRNA"/>
</dbReference>
<dbReference type="EMBL" id="AK303272">
    <property type="protein sequence ID" value="BAH13928.1"/>
    <property type="molecule type" value="mRNA"/>
</dbReference>
<dbReference type="EMBL" id="AC092539">
    <property type="status" value="NOT_ANNOTATED_CDS"/>
    <property type="molecule type" value="Genomic_DNA"/>
</dbReference>
<dbReference type="EMBL" id="AC097067">
    <property type="status" value="NOT_ANNOTATED_CDS"/>
    <property type="molecule type" value="Genomic_DNA"/>
</dbReference>
<dbReference type="EMBL" id="AC118062">
    <property type="status" value="NOT_ANNOTATED_CDS"/>
    <property type="molecule type" value="Genomic_DNA"/>
</dbReference>
<dbReference type="EMBL" id="AC123576">
    <property type="status" value="NOT_ANNOTATED_CDS"/>
    <property type="molecule type" value="Genomic_DNA"/>
</dbReference>
<dbReference type="EMBL" id="CH471057">
    <property type="protein sequence ID" value="EAX06223.1"/>
    <property type="molecule type" value="Genomic_DNA"/>
</dbReference>
<dbReference type="EMBL" id="CH471057">
    <property type="protein sequence ID" value="EAX06225.1"/>
    <property type="molecule type" value="Genomic_DNA"/>
</dbReference>
<dbReference type="EMBL" id="BC040559">
    <property type="protein sequence ID" value="AAH40559.1"/>
    <property type="molecule type" value="mRNA"/>
</dbReference>
<dbReference type="EMBL" id="BC050632">
    <property type="protein sequence ID" value="AAH50632.1"/>
    <property type="molecule type" value="mRNA"/>
</dbReference>
<dbReference type="CCDS" id="CCDS3679.1">
    <molecule id="Q9UJU2-1"/>
</dbReference>
<dbReference type="CCDS" id="CCDS47122.1">
    <molecule id="Q9UJU2-6"/>
</dbReference>
<dbReference type="CCDS" id="CCDS47123.1">
    <molecule id="Q9UJU2-5"/>
</dbReference>
<dbReference type="CCDS" id="CCDS54791.1">
    <molecule id="Q9UJU2-7"/>
</dbReference>
<dbReference type="PIR" id="A39625">
    <property type="entry name" value="A39625"/>
</dbReference>
<dbReference type="RefSeq" id="NP_001124185.1">
    <molecule id="Q9UJU2-5"/>
    <property type="nucleotide sequence ID" value="NM_001130713.3"/>
</dbReference>
<dbReference type="RefSeq" id="NP_001124186.1">
    <molecule id="Q9UJU2-6"/>
    <property type="nucleotide sequence ID" value="NM_001130714.3"/>
</dbReference>
<dbReference type="RefSeq" id="NP_001159591.1">
    <molecule id="Q9UJU2-7"/>
    <property type="nucleotide sequence ID" value="NM_001166119.2"/>
</dbReference>
<dbReference type="RefSeq" id="NP_057353.1">
    <molecule id="Q9UJU2-1"/>
    <property type="nucleotide sequence ID" value="NM_016269.5"/>
</dbReference>
<dbReference type="BMRB" id="Q9UJU2"/>
<dbReference type="SMR" id="Q9UJU2"/>
<dbReference type="BioGRID" id="119354">
    <property type="interactions" value="60"/>
</dbReference>
<dbReference type="ComplexPortal" id="CPX-316">
    <property type="entry name" value="beta1-catenin - LEF1 complex"/>
</dbReference>
<dbReference type="CORUM" id="Q9UJU2"/>
<dbReference type="DIP" id="DIP-29946N"/>
<dbReference type="FunCoup" id="Q9UJU2">
    <property type="interactions" value="910"/>
</dbReference>
<dbReference type="IntAct" id="Q9UJU2">
    <property type="interactions" value="27"/>
</dbReference>
<dbReference type="MINT" id="Q9UJU2"/>
<dbReference type="STRING" id="9606.ENSP00000265165"/>
<dbReference type="ChEMBL" id="CHEMBL3217392"/>
<dbReference type="DrugBank" id="DB00903">
    <property type="generic name" value="Etacrynic acid"/>
</dbReference>
<dbReference type="GlyConnect" id="2055">
    <property type="glycosylation" value="1 N-Linked glycan (1 site)"/>
</dbReference>
<dbReference type="GlyCosmos" id="Q9UJU2">
    <property type="glycosylation" value="1 site, 2 glycans"/>
</dbReference>
<dbReference type="GlyGen" id="Q9UJU2">
    <property type="glycosylation" value="2 sites, 2 N-linked glycans (1 site)"/>
</dbReference>
<dbReference type="iPTMnet" id="Q9UJU2"/>
<dbReference type="PhosphoSitePlus" id="Q9UJU2"/>
<dbReference type="BioMuta" id="LEF1"/>
<dbReference type="DMDM" id="8928194"/>
<dbReference type="jPOST" id="Q9UJU2"/>
<dbReference type="MassIVE" id="Q9UJU2"/>
<dbReference type="PaxDb" id="9606-ENSP00000265165"/>
<dbReference type="PeptideAtlas" id="Q9UJU2"/>
<dbReference type="ProteomicsDB" id="19686"/>
<dbReference type="ProteomicsDB" id="84650">
    <molecule id="Q9UJU2-1"/>
</dbReference>
<dbReference type="ProteomicsDB" id="84651">
    <molecule id="Q9UJU2-2"/>
</dbReference>
<dbReference type="ProteomicsDB" id="84652">
    <molecule id="Q9UJU2-3"/>
</dbReference>
<dbReference type="ProteomicsDB" id="84653">
    <molecule id="Q9UJU2-4"/>
</dbReference>
<dbReference type="ProteomicsDB" id="84654">
    <molecule id="Q9UJU2-5"/>
</dbReference>
<dbReference type="ProteomicsDB" id="84655">
    <molecule id="Q9UJU2-6"/>
</dbReference>
<dbReference type="Pumba" id="Q9UJU2"/>
<dbReference type="TopDownProteomics" id="Q9UJU2-2">
    <molecule id="Q9UJU2-2"/>
</dbReference>
<dbReference type="Antibodypedia" id="912">
    <property type="antibodies" value="842 antibodies from 45 providers"/>
</dbReference>
<dbReference type="DNASU" id="51176"/>
<dbReference type="Ensembl" id="ENST00000265165.6">
    <molecule id="Q9UJU2-1"/>
    <property type="protein sequence ID" value="ENSP00000265165.1"/>
    <property type="gene ID" value="ENSG00000138795.10"/>
</dbReference>
<dbReference type="Ensembl" id="ENST00000379951.6">
    <molecule id="Q9UJU2-6"/>
    <property type="protein sequence ID" value="ENSP00000369284.2"/>
    <property type="gene ID" value="ENSG00000138795.10"/>
</dbReference>
<dbReference type="Ensembl" id="ENST00000438313.6">
    <molecule id="Q9UJU2-5"/>
    <property type="protein sequence ID" value="ENSP00000406176.2"/>
    <property type="gene ID" value="ENSG00000138795.10"/>
</dbReference>
<dbReference type="Ensembl" id="ENST00000506680.5">
    <molecule id="Q9UJU2-2"/>
    <property type="protein sequence ID" value="ENSP00000422334.1"/>
    <property type="gene ID" value="ENSG00000138795.10"/>
</dbReference>
<dbReference type="Ensembl" id="ENST00000510624.5">
    <molecule id="Q9UJU2-7"/>
    <property type="protein sequence ID" value="ENSP00000422840.1"/>
    <property type="gene ID" value="ENSG00000138795.10"/>
</dbReference>
<dbReference type="GeneID" id="51176"/>
<dbReference type="KEGG" id="hsa:51176"/>
<dbReference type="MANE-Select" id="ENST00000265165.6">
    <property type="protein sequence ID" value="ENSP00000265165.1"/>
    <property type="RefSeq nucleotide sequence ID" value="NM_016269.5"/>
    <property type="RefSeq protein sequence ID" value="NP_057353.1"/>
</dbReference>
<dbReference type="UCSC" id="uc003hyt.3">
    <molecule id="Q9UJU2-1"/>
    <property type="organism name" value="human"/>
</dbReference>
<dbReference type="AGR" id="HGNC:6551"/>
<dbReference type="CTD" id="51176"/>
<dbReference type="DisGeNET" id="51176"/>
<dbReference type="GeneCards" id="LEF1"/>
<dbReference type="HGNC" id="HGNC:6551">
    <property type="gene designation" value="LEF1"/>
</dbReference>
<dbReference type="HPA" id="ENSG00000138795">
    <property type="expression patterns" value="Tissue enriched (lymphoid)"/>
</dbReference>
<dbReference type="MalaCards" id="LEF1"/>
<dbReference type="MIM" id="153245">
    <property type="type" value="gene"/>
</dbReference>
<dbReference type="neXtProt" id="NX_Q9UJU2"/>
<dbReference type="OpenTargets" id="ENSG00000138795"/>
<dbReference type="PharmGKB" id="PA30331"/>
<dbReference type="VEuPathDB" id="HostDB:ENSG00000138795"/>
<dbReference type="eggNOG" id="KOG3248">
    <property type="taxonomic scope" value="Eukaryota"/>
</dbReference>
<dbReference type="GeneTree" id="ENSGT00940000159660"/>
<dbReference type="HOGENOM" id="CLU_013229_5_0_1"/>
<dbReference type="InParanoid" id="Q9UJU2"/>
<dbReference type="OMA" id="NFSTCKA"/>
<dbReference type="OrthoDB" id="2307332at2759"/>
<dbReference type="PAN-GO" id="Q9UJU2">
    <property type="GO annotations" value="5 GO annotations based on evolutionary models"/>
</dbReference>
<dbReference type="PhylomeDB" id="Q9UJU2"/>
<dbReference type="TreeFam" id="TF318448"/>
<dbReference type="PathwayCommons" id="Q9UJU2"/>
<dbReference type="Reactome" id="R-HSA-201722">
    <property type="pathway name" value="Formation of the beta-catenin:TCF transactivating complex"/>
</dbReference>
<dbReference type="Reactome" id="R-HSA-3769402">
    <property type="pathway name" value="Deactivation of the beta-catenin transactivating complex"/>
</dbReference>
<dbReference type="Reactome" id="R-HSA-4086398">
    <property type="pathway name" value="Ca2+ pathway"/>
</dbReference>
<dbReference type="Reactome" id="R-HSA-4411364">
    <property type="pathway name" value="Binding of TCF/LEF:CTNNB1 to target gene promoters"/>
</dbReference>
<dbReference type="Reactome" id="R-HSA-4641265">
    <property type="pathway name" value="Repression of WNT target genes"/>
</dbReference>
<dbReference type="Reactome" id="R-HSA-8853884">
    <property type="pathway name" value="Transcriptional Regulation by VENTX"/>
</dbReference>
<dbReference type="Reactome" id="R-HSA-8951430">
    <property type="pathway name" value="RUNX3 regulates WNT signaling"/>
</dbReference>
<dbReference type="Reactome" id="R-HSA-9616222">
    <property type="pathway name" value="Transcriptional regulation of granulopoiesis"/>
</dbReference>
<dbReference type="Reactome" id="R-HSA-9733709">
    <property type="pathway name" value="Cardiogenesis"/>
</dbReference>
<dbReference type="Reactome" id="R-HSA-9754189">
    <property type="pathway name" value="Germ layer formation at gastrulation"/>
</dbReference>
<dbReference type="Reactome" id="R-HSA-9793380">
    <property type="pathway name" value="Formation of paraxial mesoderm"/>
</dbReference>
<dbReference type="Reactome" id="R-HSA-9796292">
    <property type="pathway name" value="Formation of axial mesoderm"/>
</dbReference>
<dbReference type="Reactome" id="R-HSA-9824272">
    <property type="pathway name" value="Somitogenesis"/>
</dbReference>
<dbReference type="Reactome" id="R-HSA-9824585">
    <property type="pathway name" value="Regulation of MITF-M-dependent genes involved in pigmentation"/>
</dbReference>
<dbReference type="Reactome" id="R-HSA-9825892">
    <property type="pathway name" value="Regulation of MITF-M-dependent genes involved in cell cycle and proliferation"/>
</dbReference>
<dbReference type="Reactome" id="R-HSA-9856649">
    <property type="pathway name" value="Transcriptional and post-translational regulation of MITF-M expression and activity"/>
</dbReference>
<dbReference type="SignaLink" id="Q9UJU2"/>
<dbReference type="SIGNOR" id="Q9UJU2"/>
<dbReference type="BioGRID-ORCS" id="51176">
    <property type="hits" value="13 hits in 1180 CRISPR screens"/>
</dbReference>
<dbReference type="CD-CODE" id="53379B70">
    <property type="entry name" value="LEF1/beta-catenin condensate"/>
</dbReference>
<dbReference type="ChiTaRS" id="LEF1">
    <property type="organism name" value="human"/>
</dbReference>
<dbReference type="GeneWiki" id="Lymphoid_enhancer-binding_factor_1"/>
<dbReference type="GenomeRNAi" id="51176"/>
<dbReference type="Pharos" id="Q9UJU2">
    <property type="development level" value="Tchem"/>
</dbReference>
<dbReference type="PRO" id="PR:Q9UJU2"/>
<dbReference type="Proteomes" id="UP000005640">
    <property type="component" value="Chromosome 4"/>
</dbReference>
<dbReference type="RNAct" id="Q9UJU2">
    <property type="molecule type" value="protein"/>
</dbReference>
<dbReference type="Bgee" id="ENSG00000138795">
    <property type="expression patterns" value="Expressed in thymus and 180 other cell types or tissues"/>
</dbReference>
<dbReference type="ExpressionAtlas" id="Q9UJU2">
    <property type="expression patterns" value="baseline and differential"/>
</dbReference>
<dbReference type="GO" id="GO:1990907">
    <property type="term" value="C:beta-catenin-TCF complex"/>
    <property type="evidence" value="ECO:0000353"/>
    <property type="project" value="ParkinsonsUK-UCL"/>
</dbReference>
<dbReference type="GO" id="GO:0000785">
    <property type="term" value="C:chromatin"/>
    <property type="evidence" value="ECO:0000318"/>
    <property type="project" value="GO_Central"/>
</dbReference>
<dbReference type="GO" id="GO:0005737">
    <property type="term" value="C:cytoplasm"/>
    <property type="evidence" value="ECO:0000314"/>
    <property type="project" value="UniProtKB"/>
</dbReference>
<dbReference type="GO" id="GO:0005654">
    <property type="term" value="C:nucleoplasm"/>
    <property type="evidence" value="ECO:0000304"/>
    <property type="project" value="Reactome"/>
</dbReference>
<dbReference type="GO" id="GO:0005634">
    <property type="term" value="C:nucleus"/>
    <property type="evidence" value="ECO:0000314"/>
    <property type="project" value="UniProtKB"/>
</dbReference>
<dbReference type="GO" id="GO:0032993">
    <property type="term" value="C:protein-DNA complex"/>
    <property type="evidence" value="ECO:0000314"/>
    <property type="project" value="BHF-UCL"/>
</dbReference>
<dbReference type="GO" id="GO:0005667">
    <property type="term" value="C:transcription regulator complex"/>
    <property type="evidence" value="ECO:0000314"/>
    <property type="project" value="BHF-UCL"/>
</dbReference>
<dbReference type="GO" id="GO:0070016">
    <property type="term" value="F:armadillo repeat domain binding"/>
    <property type="evidence" value="ECO:0000353"/>
    <property type="project" value="BHF-UCL"/>
</dbReference>
<dbReference type="GO" id="GO:0008013">
    <property type="term" value="F:beta-catenin binding"/>
    <property type="evidence" value="ECO:0000314"/>
    <property type="project" value="BHF-UCL"/>
</dbReference>
<dbReference type="GO" id="GO:0070742">
    <property type="term" value="F:C2H2 zinc finger domain binding"/>
    <property type="evidence" value="ECO:0000353"/>
    <property type="project" value="UniProtKB"/>
</dbReference>
<dbReference type="GO" id="GO:0003682">
    <property type="term" value="F:chromatin binding"/>
    <property type="evidence" value="ECO:0007669"/>
    <property type="project" value="Ensembl"/>
</dbReference>
<dbReference type="GO" id="GO:0003677">
    <property type="term" value="F:DNA binding"/>
    <property type="evidence" value="ECO:0000250"/>
    <property type="project" value="UniProtKB"/>
</dbReference>
<dbReference type="GO" id="GO:0008301">
    <property type="term" value="F:DNA binding, bending"/>
    <property type="evidence" value="ECO:0000250"/>
    <property type="project" value="UniProtKB"/>
</dbReference>
<dbReference type="GO" id="GO:0001228">
    <property type="term" value="F:DNA-binding transcription activator activity, RNA polymerase II-specific"/>
    <property type="evidence" value="ECO:0000315"/>
    <property type="project" value="BHF-UCL"/>
</dbReference>
<dbReference type="GO" id="GO:0003700">
    <property type="term" value="F:DNA-binding transcription factor activity"/>
    <property type="evidence" value="ECO:0000314"/>
    <property type="project" value="BHF-UCL"/>
</dbReference>
<dbReference type="GO" id="GO:0000981">
    <property type="term" value="F:DNA-binding transcription factor activity, RNA polymerase II-specific"/>
    <property type="evidence" value="ECO:0000314"/>
    <property type="project" value="GO_Central"/>
</dbReference>
<dbReference type="GO" id="GO:0001227">
    <property type="term" value="F:DNA-binding transcription repressor activity, RNA polymerase II-specific"/>
    <property type="evidence" value="ECO:0007669"/>
    <property type="project" value="Ensembl"/>
</dbReference>
<dbReference type="GO" id="GO:0045295">
    <property type="term" value="F:gamma-catenin binding"/>
    <property type="evidence" value="ECO:0000353"/>
    <property type="project" value="BHF-UCL"/>
</dbReference>
<dbReference type="GO" id="GO:0042826">
    <property type="term" value="F:histone deacetylase binding"/>
    <property type="evidence" value="ECO:0000353"/>
    <property type="project" value="ParkinsonsUK-UCL"/>
</dbReference>
<dbReference type="GO" id="GO:0030331">
    <property type="term" value="F:nuclear estrogen receptor binding"/>
    <property type="evidence" value="ECO:0000314"/>
    <property type="project" value="UniProtKB"/>
</dbReference>
<dbReference type="GO" id="GO:0000978">
    <property type="term" value="F:RNA polymerase II cis-regulatory region sequence-specific DNA binding"/>
    <property type="evidence" value="ECO:0000314"/>
    <property type="project" value="GO_Central"/>
</dbReference>
<dbReference type="GO" id="GO:0000977">
    <property type="term" value="F:RNA polymerase II transcription regulatory region sequence-specific DNA binding"/>
    <property type="evidence" value="ECO:0000314"/>
    <property type="project" value="BHF-UCL"/>
</dbReference>
<dbReference type="GO" id="GO:0043565">
    <property type="term" value="F:sequence-specific DNA binding"/>
    <property type="evidence" value="ECO:0000314"/>
    <property type="project" value="BHF-UCL"/>
</dbReference>
<dbReference type="GO" id="GO:1990837">
    <property type="term" value="F:sequence-specific double-stranded DNA binding"/>
    <property type="evidence" value="ECO:0000314"/>
    <property type="project" value="ARUK-UCL"/>
</dbReference>
<dbReference type="GO" id="GO:0001222">
    <property type="term" value="F:transcription corepressor binding"/>
    <property type="evidence" value="ECO:0000353"/>
    <property type="project" value="UniProtKB"/>
</dbReference>
<dbReference type="GO" id="GO:0140416">
    <property type="term" value="F:transcription regulator inhibitor activity"/>
    <property type="evidence" value="ECO:0000314"/>
    <property type="project" value="GO_Central"/>
</dbReference>
<dbReference type="GO" id="GO:0060033">
    <property type="term" value="P:anatomical structure regression"/>
    <property type="evidence" value="ECO:0007669"/>
    <property type="project" value="Ensembl"/>
</dbReference>
<dbReference type="GO" id="GO:1902262">
    <property type="term" value="P:apoptotic process involved in blood vessel morphogenesis"/>
    <property type="evidence" value="ECO:0007669"/>
    <property type="project" value="Ensembl"/>
</dbReference>
<dbReference type="GO" id="GO:0042100">
    <property type="term" value="P:B cell proliferation"/>
    <property type="evidence" value="ECO:0007669"/>
    <property type="project" value="Ensembl"/>
</dbReference>
<dbReference type="GO" id="GO:0030509">
    <property type="term" value="P:BMP signaling pathway"/>
    <property type="evidence" value="ECO:0007669"/>
    <property type="project" value="Ensembl"/>
</dbReference>
<dbReference type="GO" id="GO:0001569">
    <property type="term" value="P:branching involved in blood vessel morphogenesis"/>
    <property type="evidence" value="ECO:0007669"/>
    <property type="project" value="Ensembl"/>
</dbReference>
<dbReference type="GO" id="GO:0060070">
    <property type="term" value="P:canonical Wnt signaling pathway"/>
    <property type="evidence" value="ECO:0000314"/>
    <property type="project" value="BHF-UCL"/>
</dbReference>
<dbReference type="GO" id="GO:0060326">
    <property type="term" value="P:cell chemotaxis"/>
    <property type="evidence" value="ECO:0000314"/>
    <property type="project" value="UniProtKB"/>
</dbReference>
<dbReference type="GO" id="GO:0071345">
    <property type="term" value="P:cellular response to cytokine stimulus"/>
    <property type="evidence" value="ECO:0000315"/>
    <property type="project" value="BHF-UCL"/>
</dbReference>
<dbReference type="GO" id="GO:0071353">
    <property type="term" value="P:cellular response to interleukin-4"/>
    <property type="evidence" value="ECO:0000314"/>
    <property type="project" value="UniProtKB"/>
</dbReference>
<dbReference type="GO" id="GO:0060710">
    <property type="term" value="P:chorio-allantoic fusion"/>
    <property type="evidence" value="ECO:0007669"/>
    <property type="project" value="Ensembl"/>
</dbReference>
<dbReference type="GO" id="GO:0021542">
    <property type="term" value="P:dentate gyrus development"/>
    <property type="evidence" value="ECO:0007669"/>
    <property type="project" value="Ensembl"/>
</dbReference>
<dbReference type="GO" id="GO:0030326">
    <property type="term" value="P:embryonic limb morphogenesis"/>
    <property type="evidence" value="ECO:0007669"/>
    <property type="project" value="Ensembl"/>
</dbReference>
<dbReference type="GO" id="GO:1904019">
    <property type="term" value="P:epithelial cell apoptotic process"/>
    <property type="evidence" value="ECO:0007669"/>
    <property type="project" value="Ensembl"/>
</dbReference>
<dbReference type="GO" id="GO:0001837">
    <property type="term" value="P:epithelial to mesenchymal transition"/>
    <property type="evidence" value="ECO:0000250"/>
    <property type="project" value="BHF-UCL"/>
</dbReference>
<dbReference type="GO" id="GO:0060325">
    <property type="term" value="P:face morphogenesis"/>
    <property type="evidence" value="ECO:0007669"/>
    <property type="project" value="Ensembl"/>
</dbReference>
<dbReference type="GO" id="GO:0021873">
    <property type="term" value="P:forebrain neuroblast division"/>
    <property type="evidence" value="ECO:0007669"/>
    <property type="project" value="Ensembl"/>
</dbReference>
<dbReference type="GO" id="GO:0021861">
    <property type="term" value="P:forebrain radial glial cell differentiation"/>
    <property type="evidence" value="ECO:0007669"/>
    <property type="project" value="Ensembl"/>
</dbReference>
<dbReference type="GO" id="GO:0021943">
    <property type="term" value="P:formation of radial glial scaffolds"/>
    <property type="evidence" value="ECO:0007669"/>
    <property type="project" value="Ensembl"/>
</dbReference>
<dbReference type="GO" id="GO:0030879">
    <property type="term" value="P:mammary gland development"/>
    <property type="evidence" value="ECO:0007669"/>
    <property type="project" value="Ensembl"/>
</dbReference>
<dbReference type="GO" id="GO:0043066">
    <property type="term" value="P:negative regulation of apoptotic process"/>
    <property type="evidence" value="ECO:0000315"/>
    <property type="project" value="UniProtKB"/>
</dbReference>
<dbReference type="GO" id="GO:0071866">
    <property type="term" value="P:negative regulation of apoptotic process in bone marrow cell"/>
    <property type="evidence" value="ECO:0000315"/>
    <property type="project" value="UniProtKB"/>
</dbReference>
<dbReference type="GO" id="GO:0043392">
    <property type="term" value="P:negative regulation of DNA binding"/>
    <property type="evidence" value="ECO:0000314"/>
    <property type="project" value="UniProtKB"/>
</dbReference>
<dbReference type="GO" id="GO:0045892">
    <property type="term" value="P:negative regulation of DNA-templated transcription"/>
    <property type="evidence" value="ECO:0000314"/>
    <property type="project" value="UniProtKB"/>
</dbReference>
<dbReference type="GO" id="GO:0032696">
    <property type="term" value="P:negative regulation of interleukin-13 production"/>
    <property type="evidence" value="ECO:0000314"/>
    <property type="project" value="UniProtKB"/>
</dbReference>
<dbReference type="GO" id="GO:0032713">
    <property type="term" value="P:negative regulation of interleukin-4 production"/>
    <property type="evidence" value="ECO:0000314"/>
    <property type="project" value="UniProtKB"/>
</dbReference>
<dbReference type="GO" id="GO:0032714">
    <property type="term" value="P:negative regulation of interleukin-5 production"/>
    <property type="evidence" value="ECO:0000314"/>
    <property type="project" value="UniProtKB"/>
</dbReference>
<dbReference type="GO" id="GO:0045843">
    <property type="term" value="P:negative regulation of striated muscle tissue development"/>
    <property type="evidence" value="ECO:0007669"/>
    <property type="project" value="Ensembl"/>
</dbReference>
<dbReference type="GO" id="GO:0000122">
    <property type="term" value="P:negative regulation of transcription by RNA polymerase II"/>
    <property type="evidence" value="ECO:0000315"/>
    <property type="project" value="UniProtKB"/>
</dbReference>
<dbReference type="GO" id="GO:0030223">
    <property type="term" value="P:neutrophil differentiation"/>
    <property type="evidence" value="ECO:0000315"/>
    <property type="project" value="UniProtKB"/>
</dbReference>
<dbReference type="GO" id="GO:0042475">
    <property type="term" value="P:odontogenesis of dentin-containing tooth"/>
    <property type="evidence" value="ECO:0007669"/>
    <property type="project" value="Ensembl"/>
</dbReference>
<dbReference type="GO" id="GO:0001649">
    <property type="term" value="P:osteoblast differentiation"/>
    <property type="evidence" value="ECO:0000270"/>
    <property type="project" value="UniProtKB"/>
</dbReference>
<dbReference type="GO" id="GO:0048341">
    <property type="term" value="P:paraxial mesoderm formation"/>
    <property type="evidence" value="ECO:0007669"/>
    <property type="project" value="Ensembl"/>
</dbReference>
<dbReference type="GO" id="GO:0043923">
    <property type="term" value="P:positive regulation by host of viral transcription"/>
    <property type="evidence" value="ECO:0000314"/>
    <property type="project" value="UniProtKB"/>
</dbReference>
<dbReference type="GO" id="GO:0090068">
    <property type="term" value="P:positive regulation of cell cycle process"/>
    <property type="evidence" value="ECO:0000314"/>
    <property type="project" value="UniProtKB"/>
</dbReference>
<dbReference type="GO" id="GO:0045597">
    <property type="term" value="P:positive regulation of cell differentiation"/>
    <property type="evidence" value="ECO:0000303"/>
    <property type="project" value="ComplexPortal"/>
</dbReference>
<dbReference type="GO" id="GO:0030335">
    <property type="term" value="P:positive regulation of cell migration"/>
    <property type="evidence" value="ECO:0000315"/>
    <property type="project" value="UniProtKB"/>
</dbReference>
<dbReference type="GO" id="GO:0071864">
    <property type="term" value="P:positive regulation of cell proliferation in bone marrow"/>
    <property type="evidence" value="ECO:0000315"/>
    <property type="project" value="UniProtKB"/>
</dbReference>
<dbReference type="GO" id="GO:1902732">
    <property type="term" value="P:positive regulation of chondrocyte proliferation"/>
    <property type="evidence" value="ECO:0007669"/>
    <property type="project" value="Ensembl"/>
</dbReference>
<dbReference type="GO" id="GO:0045893">
    <property type="term" value="P:positive regulation of DNA-templated transcription"/>
    <property type="evidence" value="ECO:0000314"/>
    <property type="project" value="UniProtKB"/>
</dbReference>
<dbReference type="GO" id="GO:1904906">
    <property type="term" value="P:positive regulation of endothelial cell-matrix adhesion via fibronectin"/>
    <property type="evidence" value="ECO:0000304"/>
    <property type="project" value="BHF-UCL"/>
</dbReference>
<dbReference type="GO" id="GO:0010718">
    <property type="term" value="P:positive regulation of epithelial to mesenchymal transition"/>
    <property type="evidence" value="ECO:0000315"/>
    <property type="project" value="UniProtKB"/>
</dbReference>
<dbReference type="GO" id="GO:0045588">
    <property type="term" value="P:positive regulation of gamma-delta T cell differentiation"/>
    <property type="evidence" value="ECO:0000250"/>
    <property type="project" value="UniProtKB"/>
</dbReference>
<dbReference type="GO" id="GO:0010628">
    <property type="term" value="P:positive regulation of gene expression"/>
    <property type="evidence" value="ECO:0000314"/>
    <property type="project" value="AgBase"/>
</dbReference>
<dbReference type="GO" id="GO:0030854">
    <property type="term" value="P:positive regulation of granulocyte differentiation"/>
    <property type="evidence" value="ECO:0000314"/>
    <property type="project" value="UniProtKB"/>
</dbReference>
<dbReference type="GO" id="GO:1901331">
    <property type="term" value="P:positive regulation of odontoblast differentiation"/>
    <property type="evidence" value="ECO:0000250"/>
    <property type="project" value="UniProtKB"/>
</dbReference>
<dbReference type="GO" id="GO:0045944">
    <property type="term" value="P:positive regulation of transcription by RNA polymerase II"/>
    <property type="evidence" value="ECO:0000314"/>
    <property type="project" value="BHF-UCL"/>
</dbReference>
<dbReference type="GO" id="GO:0030177">
    <property type="term" value="P:positive regulation of Wnt signaling pathway"/>
    <property type="evidence" value="ECO:0007669"/>
    <property type="project" value="Ensembl"/>
</dbReference>
<dbReference type="GO" id="GO:0071168">
    <property type="term" value="P:protein localization to chromatin"/>
    <property type="evidence" value="ECO:0000315"/>
    <property type="project" value="UniProtKB"/>
</dbReference>
<dbReference type="GO" id="GO:0050767">
    <property type="term" value="P:regulation of neurogenesis"/>
    <property type="evidence" value="ECO:0000303"/>
    <property type="project" value="ComplexPortal"/>
</dbReference>
<dbReference type="GO" id="GO:0006357">
    <property type="term" value="P:regulation of transcription by RNA polymerase II"/>
    <property type="evidence" value="ECO:0000318"/>
    <property type="project" value="GO_Central"/>
</dbReference>
<dbReference type="GO" id="GO:0062009">
    <property type="term" value="P:secondary palate development"/>
    <property type="evidence" value="ECO:0000250"/>
    <property type="project" value="BHF-UCL"/>
</dbReference>
<dbReference type="GO" id="GO:0050909">
    <property type="term" value="P:sensory perception of taste"/>
    <property type="evidence" value="ECO:0007669"/>
    <property type="project" value="Ensembl"/>
</dbReference>
<dbReference type="GO" id="GO:0001756">
    <property type="term" value="P:somitogenesis"/>
    <property type="evidence" value="ECO:0007669"/>
    <property type="project" value="Ensembl"/>
</dbReference>
<dbReference type="GO" id="GO:0002040">
    <property type="term" value="P:sprouting angiogenesis"/>
    <property type="evidence" value="ECO:0007669"/>
    <property type="project" value="Ensembl"/>
</dbReference>
<dbReference type="GO" id="GO:0033153">
    <property type="term" value="P:T cell receptor V(D)J recombination"/>
    <property type="evidence" value="ECO:0007669"/>
    <property type="project" value="Ensembl"/>
</dbReference>
<dbReference type="GO" id="GO:0045063">
    <property type="term" value="P:T-helper 1 cell differentiation"/>
    <property type="evidence" value="ECO:0000250"/>
    <property type="project" value="UniProtKB"/>
</dbReference>
<dbReference type="GO" id="GO:0043586">
    <property type="term" value="P:tongue development"/>
    <property type="evidence" value="ECO:0007669"/>
    <property type="project" value="Ensembl"/>
</dbReference>
<dbReference type="GO" id="GO:0061153">
    <property type="term" value="P:trachea gland development"/>
    <property type="evidence" value="ECO:0007669"/>
    <property type="project" value="Ensembl"/>
</dbReference>
<dbReference type="GO" id="GO:0006366">
    <property type="term" value="P:transcription by RNA polymerase II"/>
    <property type="evidence" value="ECO:0007669"/>
    <property type="project" value="Ensembl"/>
</dbReference>
<dbReference type="CDD" id="cd21996">
    <property type="entry name" value="HMG-box_TCF7-like"/>
    <property type="match status" value="1"/>
</dbReference>
<dbReference type="FunFam" id="4.10.900.10:FF:000004">
    <property type="entry name" value="lymphoid enhancer-binding factor 1 isoform X2"/>
    <property type="match status" value="1"/>
</dbReference>
<dbReference type="FunFam" id="1.10.30.10:FF:000001">
    <property type="entry name" value="transcription factor 7 isoform X2"/>
    <property type="match status" value="1"/>
</dbReference>
<dbReference type="Gene3D" id="1.10.30.10">
    <property type="entry name" value="High mobility group box domain"/>
    <property type="match status" value="1"/>
</dbReference>
<dbReference type="Gene3D" id="4.10.900.10">
    <property type="entry name" value="TCF3-CBD (Catenin binding domain)"/>
    <property type="match status" value="1"/>
</dbReference>
<dbReference type="InterPro" id="IPR027397">
    <property type="entry name" value="Catenin-bd_sf"/>
</dbReference>
<dbReference type="InterPro" id="IPR013558">
    <property type="entry name" value="CTNNB1-bd_N"/>
</dbReference>
<dbReference type="InterPro" id="IPR009071">
    <property type="entry name" value="HMG_box_dom"/>
</dbReference>
<dbReference type="InterPro" id="IPR036910">
    <property type="entry name" value="HMG_box_dom_sf"/>
</dbReference>
<dbReference type="InterPro" id="IPR024940">
    <property type="entry name" value="TCF/LEF"/>
</dbReference>
<dbReference type="PANTHER" id="PTHR10373:SF11">
    <property type="entry name" value="LYMPHOID ENHANCER-BINDING FACTOR 1"/>
    <property type="match status" value="1"/>
</dbReference>
<dbReference type="PANTHER" id="PTHR10373">
    <property type="entry name" value="TRANSCRIPTION FACTOR 7 FAMILY MEMBER"/>
    <property type="match status" value="1"/>
</dbReference>
<dbReference type="Pfam" id="PF08347">
    <property type="entry name" value="CTNNB1_binding"/>
    <property type="match status" value="1"/>
</dbReference>
<dbReference type="Pfam" id="PF00505">
    <property type="entry name" value="HMG_box"/>
    <property type="match status" value="1"/>
</dbReference>
<dbReference type="SMART" id="SM00398">
    <property type="entry name" value="HMG"/>
    <property type="match status" value="1"/>
</dbReference>
<dbReference type="SUPFAM" id="SSF47095">
    <property type="entry name" value="HMG-box"/>
    <property type="match status" value="1"/>
</dbReference>
<dbReference type="PROSITE" id="PS50118">
    <property type="entry name" value="HMG_BOX_2"/>
    <property type="match status" value="1"/>
</dbReference>
<evidence type="ECO:0000250" key="1"/>
<evidence type="ECO:0000250" key="2">
    <source>
        <dbReference type="UniProtKB" id="P27782"/>
    </source>
</evidence>
<evidence type="ECO:0000255" key="3">
    <source>
        <dbReference type="PROSITE-ProRule" id="PRU00267"/>
    </source>
</evidence>
<evidence type="ECO:0000256" key="4">
    <source>
        <dbReference type="SAM" id="MobiDB-lite"/>
    </source>
</evidence>
<evidence type="ECO:0000269" key="5">
    <source>
    </source>
</evidence>
<evidence type="ECO:0000269" key="6">
    <source>
    </source>
</evidence>
<evidence type="ECO:0000269" key="7">
    <source>
    </source>
</evidence>
<evidence type="ECO:0000269" key="8">
    <source>
    </source>
</evidence>
<evidence type="ECO:0000269" key="9">
    <source>
    </source>
</evidence>
<evidence type="ECO:0000269" key="10">
    <source>
    </source>
</evidence>
<evidence type="ECO:0000269" key="11">
    <source>
    </source>
</evidence>
<evidence type="ECO:0000269" key="12">
    <source>
    </source>
</evidence>
<evidence type="ECO:0000269" key="13">
    <source>
    </source>
</evidence>
<evidence type="ECO:0000269" key="14">
    <source>
    </source>
</evidence>
<evidence type="ECO:0000269" key="15">
    <source>
    </source>
</evidence>
<evidence type="ECO:0000303" key="16">
    <source>
    </source>
</evidence>
<evidence type="ECO:0000303" key="17">
    <source>
    </source>
</evidence>
<evidence type="ECO:0000303" key="18">
    <source>
    </source>
</evidence>
<evidence type="ECO:0000303" key="19">
    <source>
    </source>
</evidence>
<evidence type="ECO:0000303" key="20">
    <source ref="4"/>
</evidence>
<evidence type="ECO:0000305" key="21"/>
<evidence type="ECO:0000305" key="22">
    <source>
    </source>
</evidence>
<evidence type="ECO:0000312" key="23">
    <source>
        <dbReference type="HGNC" id="HGNC:6551"/>
    </source>
</evidence>
<evidence type="ECO:0007744" key="24">
    <source>
    </source>
</evidence>
<keyword id="KW-0010">Activator</keyword>
<keyword id="KW-0877">Alternative promoter usage</keyword>
<keyword id="KW-0025">Alternative splicing</keyword>
<keyword id="KW-0903">Direct protein sequencing</keyword>
<keyword id="KW-0238">DNA-binding</keyword>
<keyword id="KW-1017">Isopeptide bond</keyword>
<keyword id="KW-0539">Nucleus</keyword>
<keyword id="KW-0597">Phosphoprotein</keyword>
<keyword id="KW-1267">Proteomics identification</keyword>
<keyword id="KW-1185">Reference proteome</keyword>
<keyword id="KW-0804">Transcription</keyword>
<keyword id="KW-0805">Transcription regulation</keyword>
<keyword id="KW-0832">Ubl conjugation</keyword>
<keyword id="KW-0879">Wnt signaling pathway</keyword>
<reference key="1">
    <citation type="journal article" date="1991" name="Genes Dev.">
        <title>A thymus-specific member of the HMG protein family regulates the human T cell receptor C alpha enhancer.</title>
        <authorList>
            <person name="Waterman M.L."/>
            <person name="Fischer W.H."/>
            <person name="Jones K.A."/>
        </authorList>
    </citation>
    <scope>NUCLEOTIDE SEQUENCE [MRNA] (ISOFORM 1)</scope>
    <scope>PARTIAL PROTEIN SEQUENCE</scope>
    <scope>FUNCTION</scope>
</reference>
<reference key="2">
    <citation type="journal article" date="2000" name="Nucleic Acids Res.">
        <title>The human LEF-1 gene contains a promoter preferentially active in lymphocytes and encodes multiple isoforms derived from alternative splicing.</title>
        <authorList>
            <person name="Hovanes K."/>
            <person name="Li T.W."/>
            <person name="Waterman M.L."/>
        </authorList>
    </citation>
    <scope>NUCLEOTIDE SEQUENCE [MRNA]</scope>
    <scope>ALTERNATIVE SPLICING</scope>
</reference>
<reference key="3">
    <citation type="journal article" date="2010" name="Int. J. Cancer">
        <title>Lef-1 isoforms regulate different target genes and reduce cellular adhesion.</title>
        <authorList>
            <person name="Jesse S."/>
            <person name="Koenig A."/>
            <person name="Ellenrieder V."/>
            <person name="Menke A."/>
        </authorList>
    </citation>
    <scope>NUCLEOTIDE SEQUENCE [MRNA] (ISOFORMS 1 AND 5)</scope>
    <scope>ALTERNATIVE SPLICING</scope>
    <scope>FUNCTION</scope>
    <scope>TISSUE SPECIFICITY</scope>
</reference>
<reference key="4">
    <citation type="submission" date="2000-08" db="EMBL/GenBank/DDBJ databases">
        <title>New transcript isoform of the human LEF-1 devoid of HMG domain, derived from alternative splicing of exon 8.</title>
        <authorList>
            <person name="Kobielak A."/>
            <person name="Kobielak K."/>
            <person name="Trzeciak W.H."/>
        </authorList>
    </citation>
    <scope>NUCLEOTIDE SEQUENCE [MRNA] (ISOFORMS 2 AND 3)</scope>
</reference>
<reference key="5">
    <citation type="journal article" date="2004" name="Nat. Genet.">
        <title>Complete sequencing and characterization of 21,243 full-length human cDNAs.</title>
        <authorList>
            <person name="Ota T."/>
            <person name="Suzuki Y."/>
            <person name="Nishikawa T."/>
            <person name="Otsuki T."/>
            <person name="Sugiyama T."/>
            <person name="Irie R."/>
            <person name="Wakamatsu A."/>
            <person name="Hayashi K."/>
            <person name="Sato H."/>
            <person name="Nagai K."/>
            <person name="Kimura K."/>
            <person name="Makita H."/>
            <person name="Sekine M."/>
            <person name="Obayashi M."/>
            <person name="Nishi T."/>
            <person name="Shibahara T."/>
            <person name="Tanaka T."/>
            <person name="Ishii S."/>
            <person name="Yamamoto J."/>
            <person name="Saito K."/>
            <person name="Kawai Y."/>
            <person name="Isono Y."/>
            <person name="Nakamura Y."/>
            <person name="Nagahari K."/>
            <person name="Murakami K."/>
            <person name="Yasuda T."/>
            <person name="Iwayanagi T."/>
            <person name="Wagatsuma M."/>
            <person name="Shiratori A."/>
            <person name="Sudo H."/>
            <person name="Hosoiri T."/>
            <person name="Kaku Y."/>
            <person name="Kodaira H."/>
            <person name="Kondo H."/>
            <person name="Sugawara M."/>
            <person name="Takahashi M."/>
            <person name="Kanda K."/>
            <person name="Yokoi T."/>
            <person name="Furuya T."/>
            <person name="Kikkawa E."/>
            <person name="Omura Y."/>
            <person name="Abe K."/>
            <person name="Kamihara K."/>
            <person name="Katsuta N."/>
            <person name="Sato K."/>
            <person name="Tanikawa M."/>
            <person name="Yamazaki M."/>
            <person name="Ninomiya K."/>
            <person name="Ishibashi T."/>
            <person name="Yamashita H."/>
            <person name="Murakawa K."/>
            <person name="Fujimori K."/>
            <person name="Tanai H."/>
            <person name="Kimata M."/>
            <person name="Watanabe M."/>
            <person name="Hiraoka S."/>
            <person name="Chiba Y."/>
            <person name="Ishida S."/>
            <person name="Ono Y."/>
            <person name="Takiguchi S."/>
            <person name="Watanabe S."/>
            <person name="Yosida M."/>
            <person name="Hotuta T."/>
            <person name="Kusano J."/>
            <person name="Kanehori K."/>
            <person name="Takahashi-Fujii A."/>
            <person name="Hara H."/>
            <person name="Tanase T.-O."/>
            <person name="Nomura Y."/>
            <person name="Togiya S."/>
            <person name="Komai F."/>
            <person name="Hara R."/>
            <person name="Takeuchi K."/>
            <person name="Arita M."/>
            <person name="Imose N."/>
            <person name="Musashino K."/>
            <person name="Yuuki H."/>
            <person name="Oshima A."/>
            <person name="Sasaki N."/>
            <person name="Aotsuka S."/>
            <person name="Yoshikawa Y."/>
            <person name="Matsunawa H."/>
            <person name="Ichihara T."/>
            <person name="Shiohata N."/>
            <person name="Sano S."/>
            <person name="Moriya S."/>
            <person name="Momiyama H."/>
            <person name="Satoh N."/>
            <person name="Takami S."/>
            <person name="Terashima Y."/>
            <person name="Suzuki O."/>
            <person name="Nakagawa S."/>
            <person name="Senoh A."/>
            <person name="Mizoguchi H."/>
            <person name="Goto Y."/>
            <person name="Shimizu F."/>
            <person name="Wakebe H."/>
            <person name="Hishigaki H."/>
            <person name="Watanabe T."/>
            <person name="Sugiyama A."/>
            <person name="Takemoto M."/>
            <person name="Kawakami B."/>
            <person name="Yamazaki M."/>
            <person name="Watanabe K."/>
            <person name="Kumagai A."/>
            <person name="Itakura S."/>
            <person name="Fukuzumi Y."/>
            <person name="Fujimori Y."/>
            <person name="Komiyama M."/>
            <person name="Tashiro H."/>
            <person name="Tanigami A."/>
            <person name="Fujiwara T."/>
            <person name="Ono T."/>
            <person name="Yamada K."/>
            <person name="Fujii Y."/>
            <person name="Ozaki K."/>
            <person name="Hirao M."/>
            <person name="Ohmori Y."/>
            <person name="Kawabata A."/>
            <person name="Hikiji T."/>
            <person name="Kobatake N."/>
            <person name="Inagaki H."/>
            <person name="Ikema Y."/>
            <person name="Okamoto S."/>
            <person name="Okitani R."/>
            <person name="Kawakami T."/>
            <person name="Noguchi S."/>
            <person name="Itoh T."/>
            <person name="Shigeta K."/>
            <person name="Senba T."/>
            <person name="Matsumura K."/>
            <person name="Nakajima Y."/>
            <person name="Mizuno T."/>
            <person name="Morinaga M."/>
            <person name="Sasaki M."/>
            <person name="Togashi T."/>
            <person name="Oyama M."/>
            <person name="Hata H."/>
            <person name="Watanabe M."/>
            <person name="Komatsu T."/>
            <person name="Mizushima-Sugano J."/>
            <person name="Satoh T."/>
            <person name="Shirai Y."/>
            <person name="Takahashi Y."/>
            <person name="Nakagawa K."/>
            <person name="Okumura K."/>
            <person name="Nagase T."/>
            <person name="Nomura N."/>
            <person name="Kikuchi H."/>
            <person name="Masuho Y."/>
            <person name="Yamashita R."/>
            <person name="Nakai K."/>
            <person name="Yada T."/>
            <person name="Nakamura Y."/>
            <person name="Ohara O."/>
            <person name="Isogai T."/>
            <person name="Sugano S."/>
        </authorList>
    </citation>
    <scope>NUCLEOTIDE SEQUENCE [LARGE SCALE MRNA] (ISOFORMS 5 AND 7)</scope>
    <source>
        <tissue>Amygdala</tissue>
        <tissue>Thymus</tissue>
    </source>
</reference>
<reference key="6">
    <citation type="journal article" date="2005" name="Nature">
        <title>Generation and annotation of the DNA sequences of human chromosomes 2 and 4.</title>
        <authorList>
            <person name="Hillier L.W."/>
            <person name="Graves T.A."/>
            <person name="Fulton R.S."/>
            <person name="Fulton L.A."/>
            <person name="Pepin K.H."/>
            <person name="Minx P."/>
            <person name="Wagner-McPherson C."/>
            <person name="Layman D."/>
            <person name="Wylie K."/>
            <person name="Sekhon M."/>
            <person name="Becker M.C."/>
            <person name="Fewell G.A."/>
            <person name="Delehaunty K.D."/>
            <person name="Miner T.L."/>
            <person name="Nash W.E."/>
            <person name="Kremitzki C."/>
            <person name="Oddy L."/>
            <person name="Du H."/>
            <person name="Sun H."/>
            <person name="Bradshaw-Cordum H."/>
            <person name="Ali J."/>
            <person name="Carter J."/>
            <person name="Cordes M."/>
            <person name="Harris A."/>
            <person name="Isak A."/>
            <person name="van Brunt A."/>
            <person name="Nguyen C."/>
            <person name="Du F."/>
            <person name="Courtney L."/>
            <person name="Kalicki J."/>
            <person name="Ozersky P."/>
            <person name="Abbott S."/>
            <person name="Armstrong J."/>
            <person name="Belter E.A."/>
            <person name="Caruso L."/>
            <person name="Cedroni M."/>
            <person name="Cotton M."/>
            <person name="Davidson T."/>
            <person name="Desai A."/>
            <person name="Elliott G."/>
            <person name="Erb T."/>
            <person name="Fronick C."/>
            <person name="Gaige T."/>
            <person name="Haakenson W."/>
            <person name="Haglund K."/>
            <person name="Holmes A."/>
            <person name="Harkins R."/>
            <person name="Kim K."/>
            <person name="Kruchowski S.S."/>
            <person name="Strong C.M."/>
            <person name="Grewal N."/>
            <person name="Goyea E."/>
            <person name="Hou S."/>
            <person name="Levy A."/>
            <person name="Martinka S."/>
            <person name="Mead K."/>
            <person name="McLellan M.D."/>
            <person name="Meyer R."/>
            <person name="Randall-Maher J."/>
            <person name="Tomlinson C."/>
            <person name="Dauphin-Kohlberg S."/>
            <person name="Kozlowicz-Reilly A."/>
            <person name="Shah N."/>
            <person name="Swearengen-Shahid S."/>
            <person name="Snider J."/>
            <person name="Strong J.T."/>
            <person name="Thompson J."/>
            <person name="Yoakum M."/>
            <person name="Leonard S."/>
            <person name="Pearman C."/>
            <person name="Trani L."/>
            <person name="Radionenko M."/>
            <person name="Waligorski J.E."/>
            <person name="Wang C."/>
            <person name="Rock S.M."/>
            <person name="Tin-Wollam A.-M."/>
            <person name="Maupin R."/>
            <person name="Latreille P."/>
            <person name="Wendl M.C."/>
            <person name="Yang S.-P."/>
            <person name="Pohl C."/>
            <person name="Wallis J.W."/>
            <person name="Spieth J."/>
            <person name="Bieri T.A."/>
            <person name="Berkowicz N."/>
            <person name="Nelson J.O."/>
            <person name="Osborne J."/>
            <person name="Ding L."/>
            <person name="Meyer R."/>
            <person name="Sabo A."/>
            <person name="Shotland Y."/>
            <person name="Sinha P."/>
            <person name="Wohldmann P.E."/>
            <person name="Cook L.L."/>
            <person name="Hickenbotham M.T."/>
            <person name="Eldred J."/>
            <person name="Williams D."/>
            <person name="Jones T.A."/>
            <person name="She X."/>
            <person name="Ciccarelli F.D."/>
            <person name="Izaurralde E."/>
            <person name="Taylor J."/>
            <person name="Schmutz J."/>
            <person name="Myers R.M."/>
            <person name="Cox D.R."/>
            <person name="Huang X."/>
            <person name="McPherson J.D."/>
            <person name="Mardis E.R."/>
            <person name="Clifton S.W."/>
            <person name="Warren W.C."/>
            <person name="Chinwalla A.T."/>
            <person name="Eddy S.R."/>
            <person name="Marra M.A."/>
            <person name="Ovcharenko I."/>
            <person name="Furey T.S."/>
            <person name="Miller W."/>
            <person name="Eichler E.E."/>
            <person name="Bork P."/>
            <person name="Suyama M."/>
            <person name="Torrents D."/>
            <person name="Waterston R.H."/>
            <person name="Wilson R.K."/>
        </authorList>
    </citation>
    <scope>NUCLEOTIDE SEQUENCE [LARGE SCALE GENOMIC DNA]</scope>
</reference>
<reference key="7">
    <citation type="submission" date="2005-07" db="EMBL/GenBank/DDBJ databases">
        <authorList>
            <person name="Mural R.J."/>
            <person name="Istrail S."/>
            <person name="Sutton G.G."/>
            <person name="Florea L."/>
            <person name="Halpern A.L."/>
            <person name="Mobarry C.M."/>
            <person name="Lippert R."/>
            <person name="Walenz B."/>
            <person name="Shatkay H."/>
            <person name="Dew I."/>
            <person name="Miller J.R."/>
            <person name="Flanigan M.J."/>
            <person name="Edwards N.J."/>
            <person name="Bolanos R."/>
            <person name="Fasulo D."/>
            <person name="Halldorsson B.V."/>
            <person name="Hannenhalli S."/>
            <person name="Turner R."/>
            <person name="Yooseph S."/>
            <person name="Lu F."/>
            <person name="Nusskern D.R."/>
            <person name="Shue B.C."/>
            <person name="Zheng X.H."/>
            <person name="Zhong F."/>
            <person name="Delcher A.L."/>
            <person name="Huson D.H."/>
            <person name="Kravitz S.A."/>
            <person name="Mouchard L."/>
            <person name="Reinert K."/>
            <person name="Remington K.A."/>
            <person name="Clark A.G."/>
            <person name="Waterman M.S."/>
            <person name="Eichler E.E."/>
            <person name="Adams M.D."/>
            <person name="Hunkapiller M.W."/>
            <person name="Myers E.W."/>
            <person name="Venter J.C."/>
        </authorList>
    </citation>
    <scope>NUCLEOTIDE SEQUENCE [LARGE SCALE GENOMIC DNA]</scope>
</reference>
<reference key="8">
    <citation type="journal article" date="2004" name="Genome Res.">
        <title>The status, quality, and expansion of the NIH full-length cDNA project: the Mammalian Gene Collection (MGC).</title>
        <authorList>
            <consortium name="The MGC Project Team"/>
        </authorList>
    </citation>
    <scope>NUCLEOTIDE SEQUENCE [LARGE SCALE MRNA] (ISOFORMS 1 AND 6)</scope>
    <source>
        <tissue>Skin</tissue>
        <tissue>Testis</tissue>
    </source>
</reference>
<reference key="9">
    <citation type="journal article" date="1997" name="Genes Dev.">
        <title>ALY, a context-dependent coactivator of LEF-1 and AML-1, is required for TCRalpha enhancer function.</title>
        <authorList>
            <person name="Bruhn L."/>
            <person name="Munnerlyn A."/>
            <person name="Grosschedl R."/>
        </authorList>
    </citation>
    <scope>INTERACTION WITH ALYREF/THOC4</scope>
</reference>
<reference key="10">
    <citation type="journal article" date="1998" name="Mol. Cell. Biol.">
        <title>Two members of the Tcf family implicated in Wnt/b-catenin signaling during embryogenesis in the mouse.</title>
        <authorList>
            <person name="Korinek V."/>
            <person name="Barker N."/>
            <person name="Willert K."/>
            <person name="Molenaar M."/>
            <person name="Roose J."/>
            <person name="Wagenaar G."/>
            <person name="Markman M."/>
            <person name="Lamers W."/>
            <person name="Destree O."/>
            <person name="Clevers H."/>
        </authorList>
    </citation>
    <scope>INTERACTION WITH CTNNB1</scope>
</reference>
<reference key="11">
    <citation type="journal article" date="1998" name="Proc. Natl. Acad. Sci. U.S.A.">
        <title>Transcriptional repression by AML1 and LEF-1 is mediated by the TLE/Groucho corepressors.</title>
        <authorList>
            <person name="Levanon D."/>
            <person name="Goldstein R.E."/>
            <person name="Bernstein Y."/>
            <person name="Tang H."/>
            <person name="Goldenberg D."/>
            <person name="Stifani S."/>
            <person name="Paroush Z."/>
            <person name="Groner Y."/>
        </authorList>
    </citation>
    <scope>INTERACTION WITH TLE1</scope>
    <scope>INHIBITION OF TRANSCRIPTIONAL ACTIVATION BY TLE1</scope>
</reference>
<reference key="12">
    <citation type="journal article" date="2001" name="Nat. Genet.">
        <title>Beta-catenin-sensitive isoforms of lymphoid enhancer factor-1 are selectively expressed in colon cancer.</title>
        <authorList>
            <person name="Hovanes K."/>
            <person name="Li T.W.H."/>
            <person name="Munguia J.E."/>
            <person name="Truong T."/>
            <person name="Milovanovic T."/>
            <person name="Lawrence Marsh J."/>
            <person name="Holcombe R.F."/>
            <person name="Waterman M.L."/>
        </authorList>
    </citation>
    <scope>IDENTIFICATION (ISOFORM 3)</scope>
    <scope>FUNCTION</scope>
    <scope>EXPRESSION IN COLON CANCER</scope>
</reference>
<reference key="13">
    <citation type="journal article" date="2001" name="Nucleic Acids Res.">
        <title>All Tcf HMG box transcription factors interact with Groucho-related co-repressors.</title>
        <authorList>
            <person name="Brantjes H."/>
            <person name="Roose J."/>
            <person name="van De Wetering M."/>
            <person name="Clevers H."/>
        </authorList>
    </citation>
    <scope>FUNCTIONAL INTERACTION WITH TLE1; TLE2; TLE3 AND TLE4</scope>
</reference>
<reference key="14">
    <citation type="journal article" date="2002" name="Mol. Cell. Biol.">
        <title>I-mfa domain proteins interact with Axin and affect its regulation of the Wnt and c-Jun N-terminal kinase signaling pathways.</title>
        <authorList>
            <person name="Kusano S."/>
            <person name="Raab-Traub N."/>
        </authorList>
    </citation>
    <scope>INTERACTION WITH MDFI AND MDFIC</scope>
</reference>
<reference key="15">
    <citation type="journal article" date="2003" name="Mol. Cell. Biol.">
        <title>Regulation of lymphoid enhancer factor 1/T-cell factor by mitogen-activated protein kinase-related Nemo-like kinase-dependent phosphorylation in Wnt/beta-catenin signaling.</title>
        <authorList>
            <person name="Ishitani T."/>
            <person name="Ninomiya-Tsuji J."/>
            <person name="Matsumoto K."/>
        </authorList>
    </citation>
    <scope>INTERACTION WITH NLK</scope>
    <scope>PHOSPHORYLATION AT THR-155 AND/OR SER-166 BY NLK</scope>
    <scope>MUTAGENESIS OF THR-155 AND SER-166</scope>
</reference>
<reference key="16">
    <citation type="journal article" date="2004" name="Genome Biol.">
        <title>An unappreciated role for RNA surveillance.</title>
        <authorList>
            <person name="Hillman R.T."/>
            <person name="Green R.E."/>
            <person name="Brenner S.E."/>
        </authorList>
    </citation>
    <scope>SPLICE ISOFORM(S) THAT ARE POTENTIAL NMD TARGET(S)</scope>
</reference>
<reference key="17">
    <citation type="journal article" date="2009" name="Nucleic Acids Res.">
        <title>Dazap2 modulates transcription driven by the Wnt effector TCF-4.</title>
        <authorList>
            <person name="Lukas J."/>
            <person name="Mazna P."/>
            <person name="Valenta T."/>
            <person name="Doubravska L."/>
            <person name="Pospichalova V."/>
            <person name="Vojtechova M."/>
            <person name="Fafilek B."/>
            <person name="Ivanek R."/>
            <person name="Plachy J."/>
            <person name="Novak J."/>
            <person name="Korinek V."/>
        </authorList>
    </citation>
    <scope>INTERACTION WITH DAZAP2</scope>
</reference>
<reference key="18">
    <citation type="journal article" date="2009" name="Sci. Signal.">
        <title>Quantitative phosphoproteomic analysis of T cell receptor signaling reveals system-wide modulation of protein-protein interactions.</title>
        <authorList>
            <person name="Mayya V."/>
            <person name="Lundgren D.H."/>
            <person name="Hwang S.-I."/>
            <person name="Rezaul K."/>
            <person name="Wu L."/>
            <person name="Eng J.K."/>
            <person name="Rodionov V."/>
            <person name="Han D.K."/>
        </authorList>
    </citation>
    <scope>PHOSPHORYLATION [LARGE SCALE ANALYSIS] AT SER-132</scope>
    <scope>IDENTIFICATION BY MASS SPECTROMETRY [LARGE SCALE ANALYSIS]</scope>
    <source>
        <tissue>Leukemic T-cell</tissue>
    </source>
</reference>
<reference key="19">
    <citation type="journal article" date="2006" name="Science">
        <title>The consensus coding sequences of human breast and colorectal cancers.</title>
        <authorList>
            <person name="Sjoeblom T."/>
            <person name="Jones S."/>
            <person name="Wood L.D."/>
            <person name="Parsons D.W."/>
            <person name="Lin J."/>
            <person name="Barber T.D."/>
            <person name="Mandelker D."/>
            <person name="Leary R.J."/>
            <person name="Ptak J."/>
            <person name="Silliman N."/>
            <person name="Szabo S."/>
            <person name="Buckhaults P."/>
            <person name="Farrell C."/>
            <person name="Meeh P."/>
            <person name="Markowitz S.D."/>
            <person name="Willis J."/>
            <person name="Dawson D."/>
            <person name="Willson J.K.V."/>
            <person name="Gazdar A.F."/>
            <person name="Hartigan J."/>
            <person name="Wu L."/>
            <person name="Liu C."/>
            <person name="Parmigiani G."/>
            <person name="Park B.H."/>
            <person name="Bachman K.E."/>
            <person name="Papadopoulos N."/>
            <person name="Vogelstein B."/>
            <person name="Kinzler K.W."/>
            <person name="Velculescu V.E."/>
        </authorList>
    </citation>
    <scope>VARIANT [LARGE SCALE ANALYSIS] ARG-113</scope>
</reference>
<sequence length="399" mass="44201">MPQLSGGGGGGGGDPELCATDEMIPFKDEGDPQKEKIFAEISHPEEEGDLADIKSSLVNESEIIPASNGHEVARQAQTSQEPYHDKAREHPDDGKHPDGGLYNKGPSYSSYSGYIMMPNMNNDPYMSNGSLSPPIPRTSNKVPVVQPSHAVHPLTPLITYSDEHFSPGSHPSHIPSDVNSKQGMSRHPPAPDIPTFYPLSPGGVGQITPPLGWQGQPVYPITGGFRQPYPSSLSVDTSMSRFSHHMIPGPPGPHTTGIPHPAIVTPQVKQEHPHTDSDLMHVKPQHEQRKEQEPKRPHIKKPLNAFMLYMKEMRANVVAECTLKESAAINQILGRRWHALSREEQAKYYELARKERQLHMQLYPGWSARDNYGKKKKRKREKLQESASGTGPRMTAAYI</sequence>
<organism>
    <name type="scientific">Homo sapiens</name>
    <name type="common">Human</name>
    <dbReference type="NCBI Taxonomy" id="9606"/>
    <lineage>
        <taxon>Eukaryota</taxon>
        <taxon>Metazoa</taxon>
        <taxon>Chordata</taxon>
        <taxon>Craniata</taxon>
        <taxon>Vertebrata</taxon>
        <taxon>Euteleostomi</taxon>
        <taxon>Mammalia</taxon>
        <taxon>Eutheria</taxon>
        <taxon>Euarchontoglires</taxon>
        <taxon>Primates</taxon>
        <taxon>Haplorrhini</taxon>
        <taxon>Catarrhini</taxon>
        <taxon>Hominidae</taxon>
        <taxon>Homo</taxon>
    </lineage>
</organism>